<proteinExistence type="evidence at protein level"/>
<keyword id="KW-0002">3D-structure</keyword>
<keyword id="KW-0067">ATP-binding</keyword>
<keyword id="KW-0436">Ligase</keyword>
<keyword id="KW-0547">Nucleotide-binding</keyword>
<keyword id="KW-0648">Protein biosynthesis</keyword>
<keyword id="KW-1185">Reference proteome</keyword>
<organism>
    <name type="scientific">Thermotoga maritima (strain ATCC 43589 / DSM 3109 / JCM 10099 / NBRC 100826 / MSB8)</name>
    <dbReference type="NCBI Taxonomy" id="243274"/>
    <lineage>
        <taxon>Bacteria</taxon>
        <taxon>Thermotogati</taxon>
        <taxon>Thermotogota</taxon>
        <taxon>Thermotogae</taxon>
        <taxon>Thermotogales</taxon>
        <taxon>Thermotogaceae</taxon>
        <taxon>Thermotoga</taxon>
    </lineage>
</organism>
<protein>
    <recommendedName>
        <fullName>Aspartyl/glutamyl-tRNA(Asn/Gln) amidotransferase subunit B</fullName>
        <shortName>Asp/Glu-ADT subunit B</shortName>
        <ecNumber>6.3.5.-</ecNumber>
    </recommendedName>
</protein>
<name>GATB_THEMA</name>
<sequence>MRYRPVIGLEIHVQLSTKTKAFCSCPADVFELPPNTAICPVCTGQPGALPVPNEEMIRFAVKTALALNCKIHKYSRFDRKNYFYPDLPKGYQISQYFYPIATEGFLEIDGDEGRKKVRIRRLHLEEDAGKLVHEGDSITRASYSLVDMNRCGVPLIEIVTEPDISSPREARVFMEKLRSIVRYLGVSTGDMEKGALRCDANISVVDTETGRQSNRVEVKNMNSFRFVERALEYEFERIVKAMERGEDVERETRGWDMATKITVSMRGKEEESDYRYFPEPDIPPVVLSDEYLEEVKKELPELPDEKAERFMREYGLPEYDAKVLTSSKELAEFFEECVKVVNRPKDLSNWIMTEVLRELNERNIEITESKLTPQHFADLFKLMDEGKISIKIAKEIFPEVFETGKMPSQIVEEKGLTQINDEKLIEELVKKAMEQNPKAVQDYKSGKKKAAGFFVGYVMRETKGKANPELTNRIIQKLLEGE</sequence>
<dbReference type="EC" id="6.3.5.-"/>
<dbReference type="EMBL" id="AE000512">
    <property type="protein sequence ID" value="AAD36348.1"/>
    <property type="molecule type" value="Genomic_DNA"/>
</dbReference>
<dbReference type="PIR" id="H72274">
    <property type="entry name" value="H72274"/>
</dbReference>
<dbReference type="RefSeq" id="NP_229078.1">
    <property type="nucleotide sequence ID" value="NC_000853.1"/>
</dbReference>
<dbReference type="RefSeq" id="WP_004079967.1">
    <property type="nucleotide sequence ID" value="NC_000853.1"/>
</dbReference>
<dbReference type="PDB" id="3AL0">
    <property type="method" value="X-ray"/>
    <property type="resolution" value="3.37 A"/>
    <property type="chains" value="B=1-482"/>
</dbReference>
<dbReference type="PDBsum" id="3AL0"/>
<dbReference type="SMR" id="Q9X100"/>
<dbReference type="DIP" id="DIP-59229N"/>
<dbReference type="FunCoup" id="Q9X100">
    <property type="interactions" value="385"/>
</dbReference>
<dbReference type="IntAct" id="Q9X100">
    <property type="interactions" value="1"/>
</dbReference>
<dbReference type="STRING" id="243274.TM_1273"/>
<dbReference type="PaxDb" id="243274-THEMA_07970"/>
<dbReference type="EnsemblBacteria" id="AAD36348">
    <property type="protein sequence ID" value="AAD36348"/>
    <property type="gene ID" value="TM_1273"/>
</dbReference>
<dbReference type="KEGG" id="tma:TM1273"/>
<dbReference type="KEGG" id="tmi:THEMA_07970"/>
<dbReference type="KEGG" id="tmm:Tmari_1278"/>
<dbReference type="KEGG" id="tmw:THMA_1298"/>
<dbReference type="eggNOG" id="COG0064">
    <property type="taxonomic scope" value="Bacteria"/>
</dbReference>
<dbReference type="InParanoid" id="Q9X100"/>
<dbReference type="OrthoDB" id="9804078at2"/>
<dbReference type="EvolutionaryTrace" id="Q9X100"/>
<dbReference type="Proteomes" id="UP000008183">
    <property type="component" value="Chromosome"/>
</dbReference>
<dbReference type="GO" id="GO:0050566">
    <property type="term" value="F:asparaginyl-tRNA synthase (glutamine-hydrolyzing) activity"/>
    <property type="evidence" value="ECO:0007669"/>
    <property type="project" value="RHEA"/>
</dbReference>
<dbReference type="GO" id="GO:0005524">
    <property type="term" value="F:ATP binding"/>
    <property type="evidence" value="ECO:0007669"/>
    <property type="project" value="UniProtKB-KW"/>
</dbReference>
<dbReference type="GO" id="GO:0050567">
    <property type="term" value="F:glutaminyl-tRNA synthase (glutamine-hydrolyzing) activity"/>
    <property type="evidence" value="ECO:0000318"/>
    <property type="project" value="GO_Central"/>
</dbReference>
<dbReference type="GO" id="GO:0070681">
    <property type="term" value="P:glutaminyl-tRNAGln biosynthesis via transamidation"/>
    <property type="evidence" value="ECO:0000318"/>
    <property type="project" value="GO_Central"/>
</dbReference>
<dbReference type="GO" id="GO:0006412">
    <property type="term" value="P:translation"/>
    <property type="evidence" value="ECO:0007669"/>
    <property type="project" value="UniProtKB-UniRule"/>
</dbReference>
<dbReference type="FunFam" id="1.10.10.410:FF:000001">
    <property type="entry name" value="Aspartyl/glutamyl-tRNA(Asn/Gln) amidotransferase subunit B"/>
    <property type="match status" value="1"/>
</dbReference>
<dbReference type="FunFam" id="1.10.150.380:FF:000001">
    <property type="entry name" value="Aspartyl/glutamyl-tRNA(Asn/Gln) amidotransferase subunit B"/>
    <property type="match status" value="1"/>
</dbReference>
<dbReference type="Gene3D" id="1.10.10.410">
    <property type="match status" value="1"/>
</dbReference>
<dbReference type="Gene3D" id="1.10.150.380">
    <property type="entry name" value="GatB domain, N-terminal subdomain"/>
    <property type="match status" value="1"/>
</dbReference>
<dbReference type="HAMAP" id="MF_00121">
    <property type="entry name" value="GatB"/>
    <property type="match status" value="1"/>
</dbReference>
<dbReference type="InterPro" id="IPR017959">
    <property type="entry name" value="Asn/Gln-tRNA_amidoTrfase_suB/E"/>
</dbReference>
<dbReference type="InterPro" id="IPR006075">
    <property type="entry name" value="Asn/Gln-tRNA_Trfase_suB/E_cat"/>
</dbReference>
<dbReference type="InterPro" id="IPR018027">
    <property type="entry name" value="Asn/Gln_amidotransferase"/>
</dbReference>
<dbReference type="InterPro" id="IPR003789">
    <property type="entry name" value="Asn/Gln_tRNA_amidoTrase-B-like"/>
</dbReference>
<dbReference type="InterPro" id="IPR004413">
    <property type="entry name" value="GatB"/>
</dbReference>
<dbReference type="InterPro" id="IPR042114">
    <property type="entry name" value="GatB_C_1"/>
</dbReference>
<dbReference type="InterPro" id="IPR023168">
    <property type="entry name" value="GatB_Yqey_C_2"/>
</dbReference>
<dbReference type="InterPro" id="IPR017958">
    <property type="entry name" value="Gln-tRNA_amidoTrfase_suB_CS"/>
</dbReference>
<dbReference type="InterPro" id="IPR014746">
    <property type="entry name" value="Gln_synth/guanido_kin_cat_dom"/>
</dbReference>
<dbReference type="NCBIfam" id="TIGR00133">
    <property type="entry name" value="gatB"/>
    <property type="match status" value="1"/>
</dbReference>
<dbReference type="NCBIfam" id="NF004012">
    <property type="entry name" value="PRK05477.1-2"/>
    <property type="match status" value="1"/>
</dbReference>
<dbReference type="NCBIfam" id="NF004014">
    <property type="entry name" value="PRK05477.1-4"/>
    <property type="match status" value="1"/>
</dbReference>
<dbReference type="PANTHER" id="PTHR11659">
    <property type="entry name" value="GLUTAMYL-TRNA GLN AMIDOTRANSFERASE SUBUNIT B MITOCHONDRIAL AND PROKARYOTIC PET112-RELATED"/>
    <property type="match status" value="1"/>
</dbReference>
<dbReference type="PANTHER" id="PTHR11659:SF0">
    <property type="entry name" value="GLUTAMYL-TRNA(GLN) AMIDOTRANSFERASE SUBUNIT B, MITOCHONDRIAL"/>
    <property type="match status" value="1"/>
</dbReference>
<dbReference type="Pfam" id="PF02934">
    <property type="entry name" value="GatB_N"/>
    <property type="match status" value="1"/>
</dbReference>
<dbReference type="Pfam" id="PF02637">
    <property type="entry name" value="GatB_Yqey"/>
    <property type="match status" value="1"/>
</dbReference>
<dbReference type="SMART" id="SM00845">
    <property type="entry name" value="GatB_Yqey"/>
    <property type="match status" value="1"/>
</dbReference>
<dbReference type="SUPFAM" id="SSF89095">
    <property type="entry name" value="GatB/YqeY motif"/>
    <property type="match status" value="1"/>
</dbReference>
<dbReference type="SUPFAM" id="SSF55931">
    <property type="entry name" value="Glutamine synthetase/guanido kinase"/>
    <property type="match status" value="1"/>
</dbReference>
<dbReference type="PROSITE" id="PS01234">
    <property type="entry name" value="GATB"/>
    <property type="match status" value="1"/>
</dbReference>
<gene>
    <name type="primary">gatB</name>
    <name type="ordered locus">TM_1273</name>
</gene>
<comment type="function">
    <text evidence="1">Allows the formation of correctly charged Asn-tRNA(Asn) or Gln-tRNA(Gln) through the transamidation of misacylated Asp-tRNA(Asn) or Glu-tRNA(Gln) in organisms which lack either or both of asparaginyl-tRNA or glutaminyl-tRNA synthetases. The reaction takes place in the presence of glutamine and ATP through an activated phospho-Asp-tRNA(Asn) or phospho-Glu-tRNA(Gln) (By similarity).</text>
</comment>
<comment type="catalytic activity">
    <reaction>
        <text>L-glutamyl-tRNA(Gln) + L-glutamine + ATP + H2O = L-glutaminyl-tRNA(Gln) + L-glutamate + ADP + phosphate + H(+)</text>
        <dbReference type="Rhea" id="RHEA:17521"/>
        <dbReference type="Rhea" id="RHEA-COMP:9681"/>
        <dbReference type="Rhea" id="RHEA-COMP:9684"/>
        <dbReference type="ChEBI" id="CHEBI:15377"/>
        <dbReference type="ChEBI" id="CHEBI:15378"/>
        <dbReference type="ChEBI" id="CHEBI:29985"/>
        <dbReference type="ChEBI" id="CHEBI:30616"/>
        <dbReference type="ChEBI" id="CHEBI:43474"/>
        <dbReference type="ChEBI" id="CHEBI:58359"/>
        <dbReference type="ChEBI" id="CHEBI:78520"/>
        <dbReference type="ChEBI" id="CHEBI:78521"/>
        <dbReference type="ChEBI" id="CHEBI:456216"/>
    </reaction>
</comment>
<comment type="catalytic activity">
    <reaction>
        <text>L-aspartyl-tRNA(Asn) + L-glutamine + ATP + H2O = L-asparaginyl-tRNA(Asn) + L-glutamate + ADP + phosphate + 2 H(+)</text>
        <dbReference type="Rhea" id="RHEA:14513"/>
        <dbReference type="Rhea" id="RHEA-COMP:9674"/>
        <dbReference type="Rhea" id="RHEA-COMP:9677"/>
        <dbReference type="ChEBI" id="CHEBI:15377"/>
        <dbReference type="ChEBI" id="CHEBI:15378"/>
        <dbReference type="ChEBI" id="CHEBI:29985"/>
        <dbReference type="ChEBI" id="CHEBI:30616"/>
        <dbReference type="ChEBI" id="CHEBI:43474"/>
        <dbReference type="ChEBI" id="CHEBI:58359"/>
        <dbReference type="ChEBI" id="CHEBI:78515"/>
        <dbReference type="ChEBI" id="CHEBI:78516"/>
        <dbReference type="ChEBI" id="CHEBI:456216"/>
    </reaction>
</comment>
<comment type="subunit">
    <text evidence="1">Heterotrimer of A, B and C subunits.</text>
</comment>
<comment type="similarity">
    <text evidence="2">Belongs to the GatB/GatE family. GatB subfamily.</text>
</comment>
<reference key="1">
    <citation type="journal article" date="1999" name="Nature">
        <title>Evidence for lateral gene transfer between Archaea and Bacteria from genome sequence of Thermotoga maritima.</title>
        <authorList>
            <person name="Nelson K.E."/>
            <person name="Clayton R.A."/>
            <person name="Gill S.R."/>
            <person name="Gwinn M.L."/>
            <person name="Dodson R.J."/>
            <person name="Haft D.H."/>
            <person name="Hickey E.K."/>
            <person name="Peterson J.D."/>
            <person name="Nelson W.C."/>
            <person name="Ketchum K.A."/>
            <person name="McDonald L.A."/>
            <person name="Utterback T.R."/>
            <person name="Malek J.A."/>
            <person name="Linher K.D."/>
            <person name="Garrett M.M."/>
            <person name="Stewart A.M."/>
            <person name="Cotton M.D."/>
            <person name="Pratt M.S."/>
            <person name="Phillips C.A."/>
            <person name="Richardson D.L."/>
            <person name="Heidelberg J.F."/>
            <person name="Sutton G.G."/>
            <person name="Fleischmann R.D."/>
            <person name="Eisen J.A."/>
            <person name="White O."/>
            <person name="Salzberg S.L."/>
            <person name="Smith H.O."/>
            <person name="Venter J.C."/>
            <person name="Fraser C.M."/>
        </authorList>
    </citation>
    <scope>NUCLEOTIDE SEQUENCE [LARGE SCALE GENOMIC DNA]</scope>
    <source>
        <strain>ATCC 43589 / DSM 3109 / JCM 10099 / NBRC 100826 / MSB8</strain>
    </source>
</reference>
<accession>Q9X100</accession>
<feature type="chain" id="PRO_0000148857" description="Aspartyl/glutamyl-tRNA(Asn/Gln) amidotransferase subunit B">
    <location>
        <begin position="1"/>
        <end position="482"/>
    </location>
</feature>
<feature type="strand" evidence="3">
    <location>
        <begin position="8"/>
        <end position="14"/>
    </location>
</feature>
<feature type="strand" evidence="3">
    <location>
        <begin position="21"/>
        <end position="27"/>
    </location>
</feature>
<feature type="turn" evidence="3">
    <location>
        <begin position="40"/>
        <end position="44"/>
    </location>
</feature>
<feature type="helix" evidence="3">
    <location>
        <begin position="54"/>
        <end position="66"/>
    </location>
</feature>
<feature type="strand" evidence="3">
    <location>
        <begin position="73"/>
        <end position="75"/>
    </location>
</feature>
<feature type="strand" evidence="3">
    <location>
        <begin position="78"/>
        <end position="81"/>
    </location>
</feature>
<feature type="strand" evidence="3">
    <location>
        <begin position="90"/>
        <end position="94"/>
    </location>
</feature>
<feature type="strand" evidence="3">
    <location>
        <begin position="96"/>
        <end position="98"/>
    </location>
</feature>
<feature type="strand" evidence="3">
    <location>
        <begin position="104"/>
        <end position="108"/>
    </location>
</feature>
<feature type="strand" evidence="3">
    <location>
        <begin position="111"/>
        <end position="125"/>
    </location>
</feature>
<feature type="strand" evidence="3">
    <location>
        <begin position="130"/>
        <end position="133"/>
    </location>
</feature>
<feature type="strand" evidence="3">
    <location>
        <begin position="136"/>
        <end position="139"/>
    </location>
</feature>
<feature type="strand" evidence="3">
    <location>
        <begin position="142"/>
        <end position="147"/>
    </location>
</feature>
<feature type="helix" evidence="3">
    <location>
        <begin position="148"/>
        <end position="150"/>
    </location>
</feature>
<feature type="strand" evidence="3">
    <location>
        <begin position="155"/>
        <end position="160"/>
    </location>
</feature>
<feature type="helix" evidence="3">
    <location>
        <begin position="167"/>
        <end position="184"/>
    </location>
</feature>
<feature type="helix" evidence="3">
    <location>
        <begin position="191"/>
        <end position="193"/>
    </location>
</feature>
<feature type="strand" evidence="3">
    <location>
        <begin position="195"/>
        <end position="201"/>
    </location>
</feature>
<feature type="strand" evidence="3">
    <location>
        <begin position="206"/>
        <end position="208"/>
    </location>
</feature>
<feature type="helix" evidence="3">
    <location>
        <begin position="225"/>
        <end position="236"/>
    </location>
</feature>
<feature type="strand" evidence="3">
    <location>
        <begin position="239"/>
        <end position="245"/>
    </location>
</feature>
<feature type="strand" evidence="3">
    <location>
        <begin position="254"/>
        <end position="256"/>
    </location>
</feature>
<feature type="turn" evidence="3">
    <location>
        <begin position="257"/>
        <end position="260"/>
    </location>
</feature>
<feature type="strand" evidence="3">
    <location>
        <begin position="261"/>
        <end position="263"/>
    </location>
</feature>
<feature type="helix" evidence="3">
    <location>
        <begin position="289"/>
        <end position="292"/>
    </location>
</feature>
<feature type="strand" evidence="3">
    <location>
        <begin position="295"/>
        <end position="299"/>
    </location>
</feature>
<feature type="helix" evidence="3">
    <location>
        <begin position="305"/>
        <end position="314"/>
    </location>
</feature>
<feature type="helix" evidence="3">
    <location>
        <begin position="318"/>
        <end position="324"/>
    </location>
</feature>
<feature type="helix" evidence="3">
    <location>
        <begin position="328"/>
        <end position="340"/>
    </location>
</feature>
<feature type="helix" evidence="3">
    <location>
        <begin position="344"/>
        <end position="352"/>
    </location>
</feature>
<feature type="helix" evidence="3">
    <location>
        <begin position="354"/>
        <end position="358"/>
    </location>
</feature>
<feature type="turn" evidence="3">
    <location>
        <begin position="359"/>
        <end position="363"/>
    </location>
</feature>
<feature type="strand" evidence="3">
    <location>
        <begin position="368"/>
        <end position="370"/>
    </location>
</feature>
<feature type="helix" evidence="3">
    <location>
        <begin position="373"/>
        <end position="383"/>
    </location>
</feature>
<feature type="turn" evidence="3">
    <location>
        <begin position="384"/>
        <end position="386"/>
    </location>
</feature>
<feature type="helix" evidence="3">
    <location>
        <begin position="392"/>
        <end position="395"/>
    </location>
</feature>
<feature type="helix" evidence="3">
    <location>
        <begin position="397"/>
        <end position="403"/>
    </location>
</feature>
<feature type="helix" evidence="3">
    <location>
        <begin position="407"/>
        <end position="414"/>
    </location>
</feature>
<feature type="helix" evidence="3">
    <location>
        <begin position="425"/>
        <end position="434"/>
    </location>
</feature>
<feature type="helix" evidence="3">
    <location>
        <begin position="437"/>
        <end position="443"/>
    </location>
</feature>
<feature type="helix" evidence="3">
    <location>
        <begin position="452"/>
        <end position="460"/>
    </location>
</feature>
<feature type="helix" evidence="3">
    <location>
        <begin position="468"/>
        <end position="478"/>
    </location>
</feature>
<evidence type="ECO:0000250" key="1"/>
<evidence type="ECO:0000305" key="2"/>
<evidence type="ECO:0007829" key="3">
    <source>
        <dbReference type="PDB" id="3AL0"/>
    </source>
</evidence>